<proteinExistence type="inferred from homology"/>
<organism>
    <name type="scientific">Pediococcus pentosaceus (strain ATCC 25745 / CCUG 21536 / LMG 10740 / 183-1w)</name>
    <dbReference type="NCBI Taxonomy" id="278197"/>
    <lineage>
        <taxon>Bacteria</taxon>
        <taxon>Bacillati</taxon>
        <taxon>Bacillota</taxon>
        <taxon>Bacilli</taxon>
        <taxon>Lactobacillales</taxon>
        <taxon>Lactobacillaceae</taxon>
        <taxon>Pediococcus</taxon>
    </lineage>
</organism>
<dbReference type="EC" id="4.1.2.-" evidence="1"/>
<dbReference type="EMBL" id="CP000422">
    <property type="protein sequence ID" value="ABJ67449.1"/>
    <property type="molecule type" value="Genomic_DNA"/>
</dbReference>
<dbReference type="RefSeq" id="WP_002832791.1">
    <property type="nucleotide sequence ID" value="NC_008525.1"/>
</dbReference>
<dbReference type="SMR" id="Q03H73"/>
<dbReference type="STRING" id="278197.PEPE_0353"/>
<dbReference type="GeneID" id="33062097"/>
<dbReference type="KEGG" id="ppe:PEPE_0353"/>
<dbReference type="eggNOG" id="COG3957">
    <property type="taxonomic scope" value="Bacteria"/>
</dbReference>
<dbReference type="HOGENOM" id="CLU_013954_2_0_9"/>
<dbReference type="OrthoDB" id="9768449at2"/>
<dbReference type="Proteomes" id="UP000000773">
    <property type="component" value="Chromosome"/>
</dbReference>
<dbReference type="GO" id="GO:0016832">
    <property type="term" value="F:aldehyde-lyase activity"/>
    <property type="evidence" value="ECO:0007669"/>
    <property type="project" value="UniProtKB-UniRule"/>
</dbReference>
<dbReference type="GO" id="GO:0005975">
    <property type="term" value="P:carbohydrate metabolic process"/>
    <property type="evidence" value="ECO:0007669"/>
    <property type="project" value="InterPro"/>
</dbReference>
<dbReference type="CDD" id="cd02011">
    <property type="entry name" value="TPP_PK"/>
    <property type="match status" value="1"/>
</dbReference>
<dbReference type="Gene3D" id="3.40.50.920">
    <property type="match status" value="1"/>
</dbReference>
<dbReference type="Gene3D" id="3.40.50.970">
    <property type="match status" value="2"/>
</dbReference>
<dbReference type="HAMAP" id="MF_01403">
    <property type="entry name" value="Phosphoketolase"/>
    <property type="match status" value="1"/>
</dbReference>
<dbReference type="InterPro" id="IPR023962">
    <property type="entry name" value="Phosphoketolase"/>
</dbReference>
<dbReference type="InterPro" id="IPR029061">
    <property type="entry name" value="THDP-binding"/>
</dbReference>
<dbReference type="InterPro" id="IPR009014">
    <property type="entry name" value="Transketo_C/PFOR_II"/>
</dbReference>
<dbReference type="InterPro" id="IPR005593">
    <property type="entry name" value="Xul5P/Fru6P_PKetolase"/>
</dbReference>
<dbReference type="InterPro" id="IPR018969">
    <property type="entry name" value="Xul5P/Fru6P_PKetolase_C"/>
</dbReference>
<dbReference type="InterPro" id="IPR019790">
    <property type="entry name" value="Xul5P/Fru6P_PKetolase_CS"/>
</dbReference>
<dbReference type="InterPro" id="IPR018970">
    <property type="entry name" value="Xul5P/Fru6P_PKetolase_N"/>
</dbReference>
<dbReference type="InterPro" id="IPR019789">
    <property type="entry name" value="Xul5P/Fru6P_PKetolase_ThDP_BS"/>
</dbReference>
<dbReference type="NCBIfam" id="NF003618">
    <property type="entry name" value="PRK05261.1-3"/>
    <property type="match status" value="1"/>
</dbReference>
<dbReference type="NCBIfam" id="NF003619">
    <property type="entry name" value="PRK05261.1-4"/>
    <property type="match status" value="1"/>
</dbReference>
<dbReference type="PANTHER" id="PTHR31273">
    <property type="entry name" value="PHOSPHOKETOLASE-RELATED"/>
    <property type="match status" value="1"/>
</dbReference>
<dbReference type="PANTHER" id="PTHR31273:SF0">
    <property type="entry name" value="PHOSPHOKETOLASE-RELATED"/>
    <property type="match status" value="1"/>
</dbReference>
<dbReference type="Pfam" id="PF03894">
    <property type="entry name" value="XFP"/>
    <property type="match status" value="1"/>
</dbReference>
<dbReference type="Pfam" id="PF09363">
    <property type="entry name" value="XFP_C"/>
    <property type="match status" value="1"/>
</dbReference>
<dbReference type="Pfam" id="PF09364">
    <property type="entry name" value="XFP_N"/>
    <property type="match status" value="1"/>
</dbReference>
<dbReference type="PIRSF" id="PIRSF017245">
    <property type="entry name" value="Phosphoketolase"/>
    <property type="match status" value="1"/>
</dbReference>
<dbReference type="SUPFAM" id="SSF52518">
    <property type="entry name" value="Thiamin diphosphate-binding fold (THDP-binding)"/>
    <property type="match status" value="2"/>
</dbReference>
<dbReference type="PROSITE" id="PS60002">
    <property type="entry name" value="PHOSPHOKETOLASE_1"/>
    <property type="match status" value="1"/>
</dbReference>
<dbReference type="PROSITE" id="PS60003">
    <property type="entry name" value="PHOSPHOKETOLASE_2"/>
    <property type="match status" value="1"/>
</dbReference>
<comment type="cofactor">
    <cofactor evidence="1">
        <name>thiamine diphosphate</name>
        <dbReference type="ChEBI" id="CHEBI:58937"/>
    </cofactor>
</comment>
<comment type="similarity">
    <text evidence="1">Belongs to the XFP family.</text>
</comment>
<feature type="chain" id="PRO_1000087372" description="Probable phosphoketolase">
    <location>
        <begin position="1"/>
        <end position="787"/>
    </location>
</feature>
<evidence type="ECO:0000255" key="1">
    <source>
        <dbReference type="HAMAP-Rule" id="MF_01403"/>
    </source>
</evidence>
<gene>
    <name type="ordered locus">PEPE_0353</name>
</gene>
<accession>Q03H73</accession>
<protein>
    <recommendedName>
        <fullName evidence="1">Probable phosphoketolase</fullName>
        <ecNumber evidence="1">4.1.2.-</ecNumber>
    </recommendedName>
</protein>
<name>PHK_PEDPA</name>
<reference key="1">
    <citation type="journal article" date="2006" name="Proc. Natl. Acad. Sci. U.S.A.">
        <title>Comparative genomics of the lactic acid bacteria.</title>
        <authorList>
            <person name="Makarova K.S."/>
            <person name="Slesarev A."/>
            <person name="Wolf Y.I."/>
            <person name="Sorokin A."/>
            <person name="Mirkin B."/>
            <person name="Koonin E.V."/>
            <person name="Pavlov A."/>
            <person name="Pavlova N."/>
            <person name="Karamychev V."/>
            <person name="Polouchine N."/>
            <person name="Shakhova V."/>
            <person name="Grigoriev I."/>
            <person name="Lou Y."/>
            <person name="Rohksar D."/>
            <person name="Lucas S."/>
            <person name="Huang K."/>
            <person name="Goodstein D.M."/>
            <person name="Hawkins T."/>
            <person name="Plengvidhya V."/>
            <person name="Welker D."/>
            <person name="Hughes J."/>
            <person name="Goh Y."/>
            <person name="Benson A."/>
            <person name="Baldwin K."/>
            <person name="Lee J.-H."/>
            <person name="Diaz-Muniz I."/>
            <person name="Dosti B."/>
            <person name="Smeianov V."/>
            <person name="Wechter W."/>
            <person name="Barabote R."/>
            <person name="Lorca G."/>
            <person name="Altermann E."/>
            <person name="Barrangou R."/>
            <person name="Ganesan B."/>
            <person name="Xie Y."/>
            <person name="Rawsthorne H."/>
            <person name="Tamir D."/>
            <person name="Parker C."/>
            <person name="Breidt F."/>
            <person name="Broadbent J.R."/>
            <person name="Hutkins R."/>
            <person name="O'Sullivan D."/>
            <person name="Steele J."/>
            <person name="Unlu G."/>
            <person name="Saier M.H. Jr."/>
            <person name="Klaenhammer T."/>
            <person name="Richardson P."/>
            <person name="Kozyavkin S."/>
            <person name="Weimer B.C."/>
            <person name="Mills D.A."/>
        </authorList>
    </citation>
    <scope>NUCLEOTIDE SEQUENCE [LARGE SCALE GENOMIC DNA]</scope>
    <source>
        <strain>ATCC 25745 / CCUG 21536 / LMG 10740 / 183-1w</strain>
    </source>
</reference>
<sequence>MTDYSSKEYFDKLEKFWRAANYLSVGQLYLKDNPLLKRDIKPEDVKVHPIGHWGTIPGQNYIYAHLNRVINKYGVNMFYVEGPGHGGQVMVSNSYLDGSYTEAYPAITQDEEGMKKLFKQFSWPGGVASHAAPVTPGSIHEGGELGYSLSHGVGAILDNPDQIAAVVVGDGEAETGPLAASWQHNRFINPITDGAVLPILDINGYKLSNPSLTSRMSDEELTEFFHGQHWDPYFVEGDDSEAMDPKMAEVMDKAIEKIQEIQKNARENHDETMPYWPVIVFRSPKGWTGPKTWDNKVIEGTFRAHQIPIPVDQKNLEHVDALIDWMKSYKPEELFDENGRVLPEIAEIAPKGEKRMASNPITNGGVNPTDLNLPDYRDYAVDTTKRGQNIKQDMLVWSDYLRDVITKNPTNFRMFGPDETMSNRLYGLFEVTNRQFVAPIKKDWDEALAPEGRILDAQLSEHSAEGWLETYTLTGRHGIFTSYEAFLRVVDSMITQHFKWLRKADELDWRNDYPSLNLVSTSTSFQQDHNGYTHQDPGLLTHLAEKKPEFIREYLPADANSLLAISPLVMNDRNKINLIIASKQPRPQFYSMEEAEVLAKNGLGIIDWASTTNGEEPDVVFAAAGTEPNMESLAAINILHDNFPDLKIRFINVVDLLKLQSPKVNPNGLSDEEFDRYFTKDKPVIFTFHGFEDLIRSIFFDRHNHNLHVHGYREEGDITTPFDMRVLNELDRFHLAQDTINSIPEFAEKGADFSQQMDNTLERHYQYIRDNGDDLPEVTNWTWKDVN</sequence>
<keyword id="KW-0456">Lyase</keyword>
<keyword id="KW-0786">Thiamine pyrophosphate</keyword>